<gene>
    <name evidence="1" type="primary">orn</name>
    <name type="ordered locus">Bcen2424_1078</name>
</gene>
<accession>A0K5Q4</accession>
<evidence type="ECO:0000255" key="1">
    <source>
        <dbReference type="HAMAP-Rule" id="MF_00045"/>
    </source>
</evidence>
<reference key="1">
    <citation type="submission" date="2006-08" db="EMBL/GenBank/DDBJ databases">
        <title>Complete sequence of chromosome 1 of Burkholderia cenocepacia HI2424.</title>
        <authorList>
            <person name="Copeland A."/>
            <person name="Lucas S."/>
            <person name="Lapidus A."/>
            <person name="Barry K."/>
            <person name="Detter J.C."/>
            <person name="Glavina del Rio T."/>
            <person name="Hammon N."/>
            <person name="Israni S."/>
            <person name="Pitluck S."/>
            <person name="Chain P."/>
            <person name="Malfatti S."/>
            <person name="Shin M."/>
            <person name="Vergez L."/>
            <person name="Schmutz J."/>
            <person name="Larimer F."/>
            <person name="Land M."/>
            <person name="Hauser L."/>
            <person name="Kyrpides N."/>
            <person name="Kim E."/>
            <person name="LiPuma J.J."/>
            <person name="Gonzalez C.F."/>
            <person name="Konstantinidis K."/>
            <person name="Tiedje J.M."/>
            <person name="Richardson P."/>
        </authorList>
    </citation>
    <scope>NUCLEOTIDE SEQUENCE [LARGE SCALE GENOMIC DNA]</scope>
    <source>
        <strain>HI2424</strain>
    </source>
</reference>
<name>ORN_BURCH</name>
<keyword id="KW-0963">Cytoplasm</keyword>
<keyword id="KW-0269">Exonuclease</keyword>
<keyword id="KW-0378">Hydrolase</keyword>
<keyword id="KW-0540">Nuclease</keyword>
<sequence>MTDTAASASQPALVRNELNLVWLDMEMTGLDPDNDRIIEIAVVVTNSTLDIAVEGPVFAIHQSDETLAKMDDWNKSTHGRSGLIDRVRASTVTEAEAAAQLQAFLAQYVSPGKSPMCGNSICQDRRFMARWMPEFERFFHYRNLDVSTLKELCRRWQPAIYKGFQKRAMHTALADIHESIDELKYYREHFLIPAASVSAGESAPAA</sequence>
<dbReference type="EC" id="3.1.15.-" evidence="1"/>
<dbReference type="EMBL" id="CP000458">
    <property type="protein sequence ID" value="ABK07831.1"/>
    <property type="molecule type" value="Genomic_DNA"/>
</dbReference>
<dbReference type="RefSeq" id="WP_006476541.1">
    <property type="nucleotide sequence ID" value="NC_008542.1"/>
</dbReference>
<dbReference type="SMR" id="A0K5Q4"/>
<dbReference type="GeneID" id="83047830"/>
<dbReference type="KEGG" id="bch:Bcen2424_1078"/>
<dbReference type="HOGENOM" id="CLU_064761_2_0_4"/>
<dbReference type="GO" id="GO:0005737">
    <property type="term" value="C:cytoplasm"/>
    <property type="evidence" value="ECO:0007669"/>
    <property type="project" value="UniProtKB-SubCell"/>
</dbReference>
<dbReference type="GO" id="GO:0000175">
    <property type="term" value="F:3'-5'-RNA exonuclease activity"/>
    <property type="evidence" value="ECO:0007669"/>
    <property type="project" value="InterPro"/>
</dbReference>
<dbReference type="GO" id="GO:0003676">
    <property type="term" value="F:nucleic acid binding"/>
    <property type="evidence" value="ECO:0007669"/>
    <property type="project" value="InterPro"/>
</dbReference>
<dbReference type="GO" id="GO:0006259">
    <property type="term" value="P:DNA metabolic process"/>
    <property type="evidence" value="ECO:0007669"/>
    <property type="project" value="UniProtKB-ARBA"/>
</dbReference>
<dbReference type="CDD" id="cd06135">
    <property type="entry name" value="Orn"/>
    <property type="match status" value="1"/>
</dbReference>
<dbReference type="FunFam" id="3.30.420.10:FF:000003">
    <property type="entry name" value="Oligoribonuclease"/>
    <property type="match status" value="1"/>
</dbReference>
<dbReference type="Gene3D" id="3.30.420.10">
    <property type="entry name" value="Ribonuclease H-like superfamily/Ribonuclease H"/>
    <property type="match status" value="1"/>
</dbReference>
<dbReference type="HAMAP" id="MF_00045">
    <property type="entry name" value="Oligoribonuclease"/>
    <property type="match status" value="1"/>
</dbReference>
<dbReference type="InterPro" id="IPR013520">
    <property type="entry name" value="Exonuclease_RNaseT/DNA_pol3"/>
</dbReference>
<dbReference type="InterPro" id="IPR022894">
    <property type="entry name" value="Oligoribonuclease"/>
</dbReference>
<dbReference type="InterPro" id="IPR012337">
    <property type="entry name" value="RNaseH-like_sf"/>
</dbReference>
<dbReference type="InterPro" id="IPR036397">
    <property type="entry name" value="RNaseH_sf"/>
</dbReference>
<dbReference type="NCBIfam" id="NF003765">
    <property type="entry name" value="PRK05359.1"/>
    <property type="match status" value="1"/>
</dbReference>
<dbReference type="PANTHER" id="PTHR11046">
    <property type="entry name" value="OLIGORIBONUCLEASE, MITOCHONDRIAL"/>
    <property type="match status" value="1"/>
</dbReference>
<dbReference type="PANTHER" id="PTHR11046:SF0">
    <property type="entry name" value="OLIGORIBONUCLEASE, MITOCHONDRIAL"/>
    <property type="match status" value="1"/>
</dbReference>
<dbReference type="Pfam" id="PF00929">
    <property type="entry name" value="RNase_T"/>
    <property type="match status" value="1"/>
</dbReference>
<dbReference type="SMART" id="SM00479">
    <property type="entry name" value="EXOIII"/>
    <property type="match status" value="1"/>
</dbReference>
<dbReference type="SUPFAM" id="SSF53098">
    <property type="entry name" value="Ribonuclease H-like"/>
    <property type="match status" value="1"/>
</dbReference>
<proteinExistence type="inferred from homology"/>
<organism>
    <name type="scientific">Burkholderia cenocepacia (strain HI2424)</name>
    <dbReference type="NCBI Taxonomy" id="331272"/>
    <lineage>
        <taxon>Bacteria</taxon>
        <taxon>Pseudomonadati</taxon>
        <taxon>Pseudomonadota</taxon>
        <taxon>Betaproteobacteria</taxon>
        <taxon>Burkholderiales</taxon>
        <taxon>Burkholderiaceae</taxon>
        <taxon>Burkholderia</taxon>
        <taxon>Burkholderia cepacia complex</taxon>
    </lineage>
</organism>
<protein>
    <recommendedName>
        <fullName evidence="1">Oligoribonuclease</fullName>
        <ecNumber evidence="1">3.1.15.-</ecNumber>
    </recommendedName>
</protein>
<comment type="function">
    <text evidence="1">3'-to-5' exoribonuclease specific for small oligoribonucleotides.</text>
</comment>
<comment type="subcellular location">
    <subcellularLocation>
        <location evidence="1">Cytoplasm</location>
    </subcellularLocation>
</comment>
<comment type="similarity">
    <text evidence="1">Belongs to the oligoribonuclease family.</text>
</comment>
<feature type="chain" id="PRO_1000004233" description="Oligoribonuclease">
    <location>
        <begin position="1"/>
        <end position="206"/>
    </location>
</feature>
<feature type="domain" description="Exonuclease" evidence="1">
    <location>
        <begin position="20"/>
        <end position="183"/>
    </location>
</feature>
<feature type="active site" evidence="1">
    <location>
        <position position="141"/>
    </location>
</feature>